<organism>
    <name type="scientific">Xanthomonas campestris pv. campestris (strain ATCC 33913 / DSM 3586 / NCPPB 528 / LMG 568 / P 25)</name>
    <dbReference type="NCBI Taxonomy" id="190485"/>
    <lineage>
        <taxon>Bacteria</taxon>
        <taxon>Pseudomonadati</taxon>
        <taxon>Pseudomonadota</taxon>
        <taxon>Gammaproteobacteria</taxon>
        <taxon>Lysobacterales</taxon>
        <taxon>Lysobacteraceae</taxon>
        <taxon>Xanthomonas</taxon>
    </lineage>
</organism>
<sequence>MPEQNPLPFPDGQSAPPSPAGAETGATAAALPPAAPVALDAPAPAAPVLAPARVAKRPWWARLLGRLADPWLSLTIEPEQPGRYDDGKPVVYVLEDYGLSNALILDKACREAGLPSPLVPLPGDPLERKRAYLALSRRSSSNSLIPEQRGGKTHSDSLAKLLQAHRVRADLDVHLVPVSIFVGRAPDKQSGWFAVLFSENWALVGRFRRLLSVLLNGRTTIVRFAPPISLRQTMAEGLPPERTLRKLQRVLRTHFRRIREAVIGPDLSTRRLLVDQVLAADSVREAIATQAKRDNSKPVDAWRKAHAYAWEIAADYSSPVVRSASFLLTHVWNRIYAGVLVHHLDKLKQAAPGHEVVYVPSHRSHMDYLLLSYLLYERGIVPPHIVAGINLNLPVVGTLLRKGGAFFIRRSIRGNALYSAVLSEYVAQLVAGGYSIEYFVEGGRSRTGRLLQPKGGMIAMTLRAYLRQPRKPVLFQPVYIGYEKLMEGNSYLDELTGRPKEKESIWGLLWSIPKVLKQNYGQVVVNFGEPIALNDVLAKHAPEWNGEPLPDDEKPTWLAPAVDTLATQIQTRINCAADVNPINLLALALLSTPKHAMGEADLIAQIELCKKLLAEMPYSDRVTVTPHTPARIITHAEEINVLTRVSHPLGDVLSVSGDTAVLLSYFRNNVLHLFTASSWVACCFQNNRRMSRAGLLRLGRTVYPFLQAELFLPWSEDRFAERIEQTIDMFVREGLLLNVTDDDGGILARNTGQTDEVFRLRAIGHSLQQAFERYYIAISVLVKNGPGVLGAGELESLCQQAAQRLSLLYAPAAPEFFDKTLFRSFIQKLRELRLVWPDENSKLMFDERLDAWAKDAKFILGRELRHTIERVSPEAAKPDVVSPPAE</sequence>
<proteinExistence type="inferred from homology"/>
<dbReference type="EC" id="2.3.1.15"/>
<dbReference type="EMBL" id="AE008922">
    <property type="protein sequence ID" value="AAM43349.1"/>
    <property type="status" value="ALT_INIT"/>
    <property type="molecule type" value="Genomic_DNA"/>
</dbReference>
<dbReference type="RefSeq" id="NP_639467.1">
    <property type="nucleotide sequence ID" value="NC_003902.1"/>
</dbReference>
<dbReference type="SMR" id="Q8P3E3"/>
<dbReference type="STRING" id="190485.XCC4128"/>
<dbReference type="EnsemblBacteria" id="AAM43349">
    <property type="protein sequence ID" value="AAM43349"/>
    <property type="gene ID" value="XCC4128"/>
</dbReference>
<dbReference type="KEGG" id="xcc:XCC4128"/>
<dbReference type="PATRIC" id="fig|190485.4.peg.4422"/>
<dbReference type="eggNOG" id="COG2937">
    <property type="taxonomic scope" value="Bacteria"/>
</dbReference>
<dbReference type="HOGENOM" id="CLU_015407_0_0_6"/>
<dbReference type="OrthoDB" id="335193at2"/>
<dbReference type="UniPathway" id="UPA00557">
    <property type="reaction ID" value="UER00612"/>
</dbReference>
<dbReference type="Proteomes" id="UP000001010">
    <property type="component" value="Chromosome"/>
</dbReference>
<dbReference type="GO" id="GO:0005886">
    <property type="term" value="C:plasma membrane"/>
    <property type="evidence" value="ECO:0007669"/>
    <property type="project" value="UniProtKB-SubCell"/>
</dbReference>
<dbReference type="GO" id="GO:0004366">
    <property type="term" value="F:glycerol-3-phosphate O-acyltransferase activity"/>
    <property type="evidence" value="ECO:0000318"/>
    <property type="project" value="GO_Central"/>
</dbReference>
<dbReference type="GO" id="GO:0016024">
    <property type="term" value="P:CDP-diacylglycerol biosynthetic process"/>
    <property type="evidence" value="ECO:0007669"/>
    <property type="project" value="UniProtKB-UniRule"/>
</dbReference>
<dbReference type="GO" id="GO:0006631">
    <property type="term" value="P:fatty acid metabolic process"/>
    <property type="evidence" value="ECO:0000318"/>
    <property type="project" value="GO_Central"/>
</dbReference>
<dbReference type="GO" id="GO:0008654">
    <property type="term" value="P:phospholipid biosynthetic process"/>
    <property type="evidence" value="ECO:0000318"/>
    <property type="project" value="GO_Central"/>
</dbReference>
<dbReference type="CDD" id="cd07993">
    <property type="entry name" value="LPLAT_DHAPAT-like"/>
    <property type="match status" value="1"/>
</dbReference>
<dbReference type="HAMAP" id="MF_00393">
    <property type="entry name" value="Glyc3P_acyltrans"/>
    <property type="match status" value="1"/>
</dbReference>
<dbReference type="InterPro" id="IPR022284">
    <property type="entry name" value="GPAT/DHAPAT"/>
</dbReference>
<dbReference type="InterPro" id="IPR045520">
    <property type="entry name" value="GPAT/DHAPAT_C"/>
</dbReference>
<dbReference type="InterPro" id="IPR041728">
    <property type="entry name" value="GPAT/DHAPAT_LPLAT"/>
</dbReference>
<dbReference type="InterPro" id="IPR028354">
    <property type="entry name" value="GPAT_PlsB"/>
</dbReference>
<dbReference type="InterPro" id="IPR002123">
    <property type="entry name" value="Plipid/glycerol_acylTrfase"/>
</dbReference>
<dbReference type="NCBIfam" id="TIGR03703">
    <property type="entry name" value="plsB"/>
    <property type="match status" value="1"/>
</dbReference>
<dbReference type="NCBIfam" id="NF003441">
    <property type="entry name" value="PRK04974.1"/>
    <property type="match status" value="1"/>
</dbReference>
<dbReference type="PANTHER" id="PTHR12563:SF17">
    <property type="entry name" value="DIHYDROXYACETONE PHOSPHATE ACYLTRANSFERASE"/>
    <property type="match status" value="1"/>
</dbReference>
<dbReference type="PANTHER" id="PTHR12563">
    <property type="entry name" value="GLYCEROL-3-PHOSPHATE ACYLTRANSFERASE"/>
    <property type="match status" value="1"/>
</dbReference>
<dbReference type="Pfam" id="PF01553">
    <property type="entry name" value="Acyltransferase"/>
    <property type="match status" value="1"/>
</dbReference>
<dbReference type="Pfam" id="PF19277">
    <property type="entry name" value="GPAT_C"/>
    <property type="match status" value="1"/>
</dbReference>
<dbReference type="PIRSF" id="PIRSF500064">
    <property type="entry name" value="GPAT"/>
    <property type="match status" value="1"/>
</dbReference>
<dbReference type="PIRSF" id="PIRSF000437">
    <property type="entry name" value="GPAT_DHAPAT"/>
    <property type="match status" value="1"/>
</dbReference>
<dbReference type="SMART" id="SM00563">
    <property type="entry name" value="PlsC"/>
    <property type="match status" value="1"/>
</dbReference>
<dbReference type="SUPFAM" id="SSF69593">
    <property type="entry name" value="Glycerol-3-phosphate (1)-acyltransferase"/>
    <property type="match status" value="1"/>
</dbReference>
<protein>
    <recommendedName>
        <fullName>Glycerol-3-phosphate acyltransferase</fullName>
        <shortName>GPAT</shortName>
        <ecNumber>2.3.1.15</ecNumber>
    </recommendedName>
</protein>
<gene>
    <name type="primary">plsB</name>
    <name type="ordered locus">XCC4128</name>
</gene>
<name>PLSB_XANCP</name>
<comment type="catalytic activity">
    <reaction>
        <text>sn-glycerol 3-phosphate + an acyl-CoA = a 1-acyl-sn-glycero-3-phosphate + CoA</text>
        <dbReference type="Rhea" id="RHEA:15325"/>
        <dbReference type="ChEBI" id="CHEBI:57287"/>
        <dbReference type="ChEBI" id="CHEBI:57597"/>
        <dbReference type="ChEBI" id="CHEBI:57970"/>
        <dbReference type="ChEBI" id="CHEBI:58342"/>
        <dbReference type="EC" id="2.3.1.15"/>
    </reaction>
</comment>
<comment type="pathway">
    <text>Phospholipid metabolism; CDP-diacylglycerol biosynthesis; CDP-diacylglycerol from sn-glycerol 3-phosphate: step 1/3.</text>
</comment>
<comment type="subcellular location">
    <subcellularLocation>
        <location evidence="1">Cell inner membrane</location>
        <topology evidence="1">Peripheral membrane protein</topology>
        <orientation evidence="1">Cytoplasmic side</orientation>
    </subcellularLocation>
</comment>
<comment type="domain">
    <text evidence="1">The HXXXXD motif is essential for acyltransferase activity and may constitute the binding site for the phosphate moiety of the glycerol-3-phosphate.</text>
</comment>
<comment type="similarity">
    <text evidence="3">Belongs to the GPAT/DAPAT family.</text>
</comment>
<comment type="sequence caution" evidence="3">
    <conflict type="erroneous initiation">
        <sequence resource="EMBL-CDS" id="AAM43349"/>
    </conflict>
</comment>
<reference key="1">
    <citation type="journal article" date="2002" name="Nature">
        <title>Comparison of the genomes of two Xanthomonas pathogens with differing host specificities.</title>
        <authorList>
            <person name="da Silva A.C.R."/>
            <person name="Ferro J.A."/>
            <person name="Reinach F.C."/>
            <person name="Farah C.S."/>
            <person name="Furlan L.R."/>
            <person name="Quaggio R.B."/>
            <person name="Monteiro-Vitorello C.B."/>
            <person name="Van Sluys M.A."/>
            <person name="Almeida N.F. Jr."/>
            <person name="Alves L.M.C."/>
            <person name="do Amaral A.M."/>
            <person name="Bertolini M.C."/>
            <person name="Camargo L.E.A."/>
            <person name="Camarotte G."/>
            <person name="Cannavan F."/>
            <person name="Cardozo J."/>
            <person name="Chambergo F."/>
            <person name="Ciapina L.P."/>
            <person name="Cicarelli R.M.B."/>
            <person name="Coutinho L.L."/>
            <person name="Cursino-Santos J.R."/>
            <person name="El-Dorry H."/>
            <person name="Faria J.B."/>
            <person name="Ferreira A.J.S."/>
            <person name="Ferreira R.C.C."/>
            <person name="Ferro M.I.T."/>
            <person name="Formighieri E.F."/>
            <person name="Franco M.C."/>
            <person name="Greggio C.C."/>
            <person name="Gruber A."/>
            <person name="Katsuyama A.M."/>
            <person name="Kishi L.T."/>
            <person name="Leite R.P."/>
            <person name="Lemos E.G.M."/>
            <person name="Lemos M.V.F."/>
            <person name="Locali E.C."/>
            <person name="Machado M.A."/>
            <person name="Madeira A.M.B.N."/>
            <person name="Martinez-Rossi N.M."/>
            <person name="Martins E.C."/>
            <person name="Meidanis J."/>
            <person name="Menck C.F.M."/>
            <person name="Miyaki C.Y."/>
            <person name="Moon D.H."/>
            <person name="Moreira L.M."/>
            <person name="Novo M.T.M."/>
            <person name="Okura V.K."/>
            <person name="Oliveira M.C."/>
            <person name="Oliveira V.R."/>
            <person name="Pereira H.A."/>
            <person name="Rossi A."/>
            <person name="Sena J.A.D."/>
            <person name="Silva C."/>
            <person name="de Souza R.F."/>
            <person name="Spinola L.A.F."/>
            <person name="Takita M.A."/>
            <person name="Tamura R.E."/>
            <person name="Teixeira E.C."/>
            <person name="Tezza R.I.D."/>
            <person name="Trindade dos Santos M."/>
            <person name="Truffi D."/>
            <person name="Tsai S.M."/>
            <person name="White F.F."/>
            <person name="Setubal J.C."/>
            <person name="Kitajima J.P."/>
        </authorList>
    </citation>
    <scope>NUCLEOTIDE SEQUENCE [LARGE SCALE GENOMIC DNA]</scope>
    <source>
        <strain>ATCC 33913 / DSM 3586 / NCPPB 528 / LMG 568 / P 25</strain>
    </source>
</reference>
<feature type="chain" id="PRO_0000195240" description="Glycerol-3-phosphate acyltransferase">
    <location>
        <begin position="1"/>
        <end position="886"/>
    </location>
</feature>
<feature type="region of interest" description="Disordered" evidence="2">
    <location>
        <begin position="1"/>
        <end position="29"/>
    </location>
</feature>
<feature type="short sequence motif" description="HXXXXD motif">
    <location>
        <begin position="362"/>
        <end position="367"/>
    </location>
</feature>
<feature type="compositionally biased region" description="Low complexity" evidence="2">
    <location>
        <begin position="20"/>
        <end position="29"/>
    </location>
</feature>
<evidence type="ECO:0000250" key="1"/>
<evidence type="ECO:0000256" key="2">
    <source>
        <dbReference type="SAM" id="MobiDB-lite"/>
    </source>
</evidence>
<evidence type="ECO:0000305" key="3"/>
<keyword id="KW-0012">Acyltransferase</keyword>
<keyword id="KW-0997">Cell inner membrane</keyword>
<keyword id="KW-1003">Cell membrane</keyword>
<keyword id="KW-0444">Lipid biosynthesis</keyword>
<keyword id="KW-0443">Lipid metabolism</keyword>
<keyword id="KW-0472">Membrane</keyword>
<keyword id="KW-0594">Phospholipid biosynthesis</keyword>
<keyword id="KW-1208">Phospholipid metabolism</keyword>
<keyword id="KW-1185">Reference proteome</keyword>
<keyword id="KW-0808">Transferase</keyword>
<accession>Q8P3E3</accession>